<dbReference type="EC" id="6.3.5.2" evidence="1"/>
<dbReference type="EMBL" id="CP001074">
    <property type="protein sequence ID" value="ACE89328.1"/>
    <property type="molecule type" value="Genomic_DNA"/>
</dbReference>
<dbReference type="SMR" id="B3PYH7"/>
<dbReference type="KEGG" id="rec:RHECIAT_CH0000334"/>
<dbReference type="eggNOG" id="COG0518">
    <property type="taxonomic scope" value="Bacteria"/>
</dbReference>
<dbReference type="eggNOG" id="COG0519">
    <property type="taxonomic scope" value="Bacteria"/>
</dbReference>
<dbReference type="HOGENOM" id="CLU_014340_0_5_5"/>
<dbReference type="UniPathway" id="UPA00189">
    <property type="reaction ID" value="UER00296"/>
</dbReference>
<dbReference type="Proteomes" id="UP000008817">
    <property type="component" value="Chromosome"/>
</dbReference>
<dbReference type="GO" id="GO:0005829">
    <property type="term" value="C:cytosol"/>
    <property type="evidence" value="ECO:0007669"/>
    <property type="project" value="TreeGrafter"/>
</dbReference>
<dbReference type="GO" id="GO:0005524">
    <property type="term" value="F:ATP binding"/>
    <property type="evidence" value="ECO:0007669"/>
    <property type="project" value="UniProtKB-UniRule"/>
</dbReference>
<dbReference type="GO" id="GO:0003921">
    <property type="term" value="F:GMP synthase activity"/>
    <property type="evidence" value="ECO:0007669"/>
    <property type="project" value="InterPro"/>
</dbReference>
<dbReference type="CDD" id="cd01742">
    <property type="entry name" value="GATase1_GMP_Synthase"/>
    <property type="match status" value="1"/>
</dbReference>
<dbReference type="CDD" id="cd01997">
    <property type="entry name" value="GMP_synthase_C"/>
    <property type="match status" value="1"/>
</dbReference>
<dbReference type="FunFam" id="3.30.300.10:FF:000002">
    <property type="entry name" value="GMP synthase [glutamine-hydrolyzing]"/>
    <property type="match status" value="1"/>
</dbReference>
<dbReference type="FunFam" id="3.40.50.620:FF:000001">
    <property type="entry name" value="GMP synthase [glutamine-hydrolyzing]"/>
    <property type="match status" value="1"/>
</dbReference>
<dbReference type="FunFam" id="3.40.50.880:FF:000001">
    <property type="entry name" value="GMP synthase [glutamine-hydrolyzing]"/>
    <property type="match status" value="1"/>
</dbReference>
<dbReference type="Gene3D" id="3.30.300.10">
    <property type="match status" value="1"/>
</dbReference>
<dbReference type="Gene3D" id="3.40.50.880">
    <property type="match status" value="1"/>
</dbReference>
<dbReference type="Gene3D" id="3.40.50.620">
    <property type="entry name" value="HUPs"/>
    <property type="match status" value="1"/>
</dbReference>
<dbReference type="HAMAP" id="MF_00344">
    <property type="entry name" value="GMP_synthase"/>
    <property type="match status" value="1"/>
</dbReference>
<dbReference type="InterPro" id="IPR029062">
    <property type="entry name" value="Class_I_gatase-like"/>
</dbReference>
<dbReference type="InterPro" id="IPR017926">
    <property type="entry name" value="GATASE"/>
</dbReference>
<dbReference type="InterPro" id="IPR001674">
    <property type="entry name" value="GMP_synth_C"/>
</dbReference>
<dbReference type="InterPro" id="IPR004739">
    <property type="entry name" value="GMP_synth_GATase"/>
</dbReference>
<dbReference type="InterPro" id="IPR022955">
    <property type="entry name" value="GMP_synthase"/>
</dbReference>
<dbReference type="InterPro" id="IPR025777">
    <property type="entry name" value="GMPS_ATP_PPase_dom"/>
</dbReference>
<dbReference type="InterPro" id="IPR022310">
    <property type="entry name" value="NAD/GMP_synthase"/>
</dbReference>
<dbReference type="InterPro" id="IPR014729">
    <property type="entry name" value="Rossmann-like_a/b/a_fold"/>
</dbReference>
<dbReference type="NCBIfam" id="TIGR00884">
    <property type="entry name" value="guaA_Cterm"/>
    <property type="match status" value="1"/>
</dbReference>
<dbReference type="NCBIfam" id="TIGR00888">
    <property type="entry name" value="guaA_Nterm"/>
    <property type="match status" value="1"/>
</dbReference>
<dbReference type="NCBIfam" id="NF000848">
    <property type="entry name" value="PRK00074.1"/>
    <property type="match status" value="1"/>
</dbReference>
<dbReference type="PANTHER" id="PTHR11922:SF2">
    <property type="entry name" value="GMP SYNTHASE [GLUTAMINE-HYDROLYZING]"/>
    <property type="match status" value="1"/>
</dbReference>
<dbReference type="PANTHER" id="PTHR11922">
    <property type="entry name" value="GMP SYNTHASE-RELATED"/>
    <property type="match status" value="1"/>
</dbReference>
<dbReference type="Pfam" id="PF00117">
    <property type="entry name" value="GATase"/>
    <property type="match status" value="1"/>
</dbReference>
<dbReference type="Pfam" id="PF00958">
    <property type="entry name" value="GMP_synt_C"/>
    <property type="match status" value="1"/>
</dbReference>
<dbReference type="Pfam" id="PF02540">
    <property type="entry name" value="NAD_synthase"/>
    <property type="match status" value="1"/>
</dbReference>
<dbReference type="PRINTS" id="PR00097">
    <property type="entry name" value="ANTSNTHASEII"/>
</dbReference>
<dbReference type="PRINTS" id="PR00096">
    <property type="entry name" value="GATASE"/>
</dbReference>
<dbReference type="SUPFAM" id="SSF52402">
    <property type="entry name" value="Adenine nucleotide alpha hydrolases-like"/>
    <property type="match status" value="1"/>
</dbReference>
<dbReference type="SUPFAM" id="SSF52317">
    <property type="entry name" value="Class I glutamine amidotransferase-like"/>
    <property type="match status" value="1"/>
</dbReference>
<dbReference type="SUPFAM" id="SSF54810">
    <property type="entry name" value="GMP synthetase C-terminal dimerisation domain"/>
    <property type="match status" value="1"/>
</dbReference>
<dbReference type="PROSITE" id="PS51273">
    <property type="entry name" value="GATASE_TYPE_1"/>
    <property type="match status" value="1"/>
</dbReference>
<dbReference type="PROSITE" id="PS51553">
    <property type="entry name" value="GMPS_ATP_PPASE"/>
    <property type="match status" value="1"/>
</dbReference>
<keyword id="KW-0067">ATP-binding</keyword>
<keyword id="KW-0315">Glutamine amidotransferase</keyword>
<keyword id="KW-0332">GMP biosynthesis</keyword>
<keyword id="KW-0436">Ligase</keyword>
<keyword id="KW-0547">Nucleotide-binding</keyword>
<keyword id="KW-0658">Purine biosynthesis</keyword>
<protein>
    <recommendedName>
        <fullName evidence="1">GMP synthase [glutamine-hydrolyzing]</fullName>
        <ecNumber evidence="1">6.3.5.2</ecNumber>
    </recommendedName>
    <alternativeName>
        <fullName evidence="1">GMP synthetase</fullName>
    </alternativeName>
    <alternativeName>
        <fullName evidence="1">Glutamine amidotransferase</fullName>
    </alternativeName>
</protein>
<comment type="function">
    <text evidence="1">Catalyzes the synthesis of GMP from XMP.</text>
</comment>
<comment type="catalytic activity">
    <reaction evidence="1">
        <text>XMP + L-glutamine + ATP + H2O = GMP + L-glutamate + AMP + diphosphate + 2 H(+)</text>
        <dbReference type="Rhea" id="RHEA:11680"/>
        <dbReference type="ChEBI" id="CHEBI:15377"/>
        <dbReference type="ChEBI" id="CHEBI:15378"/>
        <dbReference type="ChEBI" id="CHEBI:29985"/>
        <dbReference type="ChEBI" id="CHEBI:30616"/>
        <dbReference type="ChEBI" id="CHEBI:33019"/>
        <dbReference type="ChEBI" id="CHEBI:57464"/>
        <dbReference type="ChEBI" id="CHEBI:58115"/>
        <dbReference type="ChEBI" id="CHEBI:58359"/>
        <dbReference type="ChEBI" id="CHEBI:456215"/>
        <dbReference type="EC" id="6.3.5.2"/>
    </reaction>
</comment>
<comment type="pathway">
    <text evidence="1">Purine metabolism; GMP biosynthesis; GMP from XMP (L-Gln route): step 1/1.</text>
</comment>
<comment type="subunit">
    <text evidence="1">Homodimer.</text>
</comment>
<reference key="1">
    <citation type="journal article" date="2010" name="Appl. Environ. Microbiol.">
        <title>Conserved symbiotic plasmid DNA sequences in the multireplicon pangenomic structure of Rhizobium etli.</title>
        <authorList>
            <person name="Gonzalez V."/>
            <person name="Acosta J.L."/>
            <person name="Santamaria R.I."/>
            <person name="Bustos P."/>
            <person name="Fernandez J.L."/>
            <person name="Hernandez Gonzalez I.L."/>
            <person name="Diaz R."/>
            <person name="Flores M."/>
            <person name="Palacios R."/>
            <person name="Mora J."/>
            <person name="Davila G."/>
        </authorList>
    </citation>
    <scope>NUCLEOTIDE SEQUENCE [LARGE SCALE GENOMIC DNA]</scope>
    <source>
        <strain>CIAT 652</strain>
    </source>
</reference>
<sequence length="520" mass="57343">MTHTAHPDSVLIVDFGSQVTQLIARRVREAGVYCEIVPFQSAEEGFKRLQPKAVILSGSPASTVDEGSPRAPQIIFDSGLPVFGICYGQQTMCMQLGGKVESGHHREFGRAFLDVDKDCQLFEGLWSSGSRHQVWMSHGDRVTALPDGFEVVATSSNAPFAFIADEKRKYYGVQFHPEVVHTPDGAKLIGNFIHNIAGIKGDWSMSAYRQKAVDEIRKQVGDKRVICALSGGVDSSVAALLIHEAVGDQLTCILVDHGLMRKDEAANVVAMFREHYNLHLLHVDASDRFIGELEGVSDPETKRKIIGRLFIETFEEEAKKLGGADFLGQGTLYPDVIESVSFTGGPSVTIKSHHNVGGLPERMKMQLVEPLRELFKDEVRALGRELGLPDSFIGRHPFPGPGLAIRCPGGISREKLEILREADAIYLDEIRKAGLYDAIWQAFAVLLPVQTVGVMGDGRTYEFVCALRAVTSVDGMTADFYHYDMEFLGRAATRIINEVRGINRVVYDVTSKPPGTIEWE</sequence>
<accession>B3PYH7</accession>
<organism>
    <name type="scientific">Rhizobium etli (strain CIAT 652)</name>
    <dbReference type="NCBI Taxonomy" id="491916"/>
    <lineage>
        <taxon>Bacteria</taxon>
        <taxon>Pseudomonadati</taxon>
        <taxon>Pseudomonadota</taxon>
        <taxon>Alphaproteobacteria</taxon>
        <taxon>Hyphomicrobiales</taxon>
        <taxon>Rhizobiaceae</taxon>
        <taxon>Rhizobium/Agrobacterium group</taxon>
        <taxon>Rhizobium</taxon>
    </lineage>
</organism>
<proteinExistence type="inferred from homology"/>
<evidence type="ECO:0000255" key="1">
    <source>
        <dbReference type="HAMAP-Rule" id="MF_00344"/>
    </source>
</evidence>
<gene>
    <name evidence="1" type="primary">guaA</name>
    <name type="ordered locus">RHECIAT_CH0000334</name>
</gene>
<feature type="chain" id="PRO_1000120376" description="GMP synthase [glutamine-hydrolyzing]">
    <location>
        <begin position="1"/>
        <end position="520"/>
    </location>
</feature>
<feature type="domain" description="Glutamine amidotransferase type-1" evidence="1">
    <location>
        <begin position="9"/>
        <end position="202"/>
    </location>
</feature>
<feature type="domain" description="GMPS ATP-PPase" evidence="1">
    <location>
        <begin position="203"/>
        <end position="395"/>
    </location>
</feature>
<feature type="active site" description="Nucleophile" evidence="1">
    <location>
        <position position="86"/>
    </location>
</feature>
<feature type="active site" evidence="1">
    <location>
        <position position="176"/>
    </location>
</feature>
<feature type="active site" evidence="1">
    <location>
        <position position="178"/>
    </location>
</feature>
<feature type="binding site" evidence="1">
    <location>
        <begin position="230"/>
        <end position="236"/>
    </location>
    <ligand>
        <name>ATP</name>
        <dbReference type="ChEBI" id="CHEBI:30616"/>
    </ligand>
</feature>
<name>GUAA_RHIE6</name>